<reference key="1">
    <citation type="journal article" date="2000" name="Nature">
        <title>Sequence and analysis of chromosome 5 of the plant Arabidopsis thaliana.</title>
        <authorList>
            <person name="Tabata S."/>
            <person name="Kaneko T."/>
            <person name="Nakamura Y."/>
            <person name="Kotani H."/>
            <person name="Kato T."/>
            <person name="Asamizu E."/>
            <person name="Miyajima N."/>
            <person name="Sasamoto S."/>
            <person name="Kimura T."/>
            <person name="Hosouchi T."/>
            <person name="Kawashima K."/>
            <person name="Kohara M."/>
            <person name="Matsumoto M."/>
            <person name="Matsuno A."/>
            <person name="Muraki A."/>
            <person name="Nakayama S."/>
            <person name="Nakazaki N."/>
            <person name="Naruo K."/>
            <person name="Okumura S."/>
            <person name="Shinpo S."/>
            <person name="Takeuchi C."/>
            <person name="Wada T."/>
            <person name="Watanabe A."/>
            <person name="Yamada M."/>
            <person name="Yasuda M."/>
            <person name="Sato S."/>
            <person name="de la Bastide M."/>
            <person name="Huang E."/>
            <person name="Spiegel L."/>
            <person name="Gnoj L."/>
            <person name="O'Shaughnessy A."/>
            <person name="Preston R."/>
            <person name="Habermann K."/>
            <person name="Murray J."/>
            <person name="Johnson D."/>
            <person name="Rohlfing T."/>
            <person name="Nelson J."/>
            <person name="Stoneking T."/>
            <person name="Pepin K."/>
            <person name="Spieth J."/>
            <person name="Sekhon M."/>
            <person name="Armstrong J."/>
            <person name="Becker M."/>
            <person name="Belter E."/>
            <person name="Cordum H."/>
            <person name="Cordes M."/>
            <person name="Courtney L."/>
            <person name="Courtney W."/>
            <person name="Dante M."/>
            <person name="Du H."/>
            <person name="Edwards J."/>
            <person name="Fryman J."/>
            <person name="Haakensen B."/>
            <person name="Lamar E."/>
            <person name="Latreille P."/>
            <person name="Leonard S."/>
            <person name="Meyer R."/>
            <person name="Mulvaney E."/>
            <person name="Ozersky P."/>
            <person name="Riley A."/>
            <person name="Strowmatt C."/>
            <person name="Wagner-McPherson C."/>
            <person name="Wollam A."/>
            <person name="Yoakum M."/>
            <person name="Bell M."/>
            <person name="Dedhia N."/>
            <person name="Parnell L."/>
            <person name="Shah R."/>
            <person name="Rodriguez M."/>
            <person name="Hoon See L."/>
            <person name="Vil D."/>
            <person name="Baker J."/>
            <person name="Kirchoff K."/>
            <person name="Toth K."/>
            <person name="King L."/>
            <person name="Bahret A."/>
            <person name="Miller B."/>
            <person name="Marra M.A."/>
            <person name="Martienssen R."/>
            <person name="McCombie W.R."/>
            <person name="Wilson R.K."/>
            <person name="Murphy G."/>
            <person name="Bancroft I."/>
            <person name="Volckaert G."/>
            <person name="Wambutt R."/>
            <person name="Duesterhoeft A."/>
            <person name="Stiekema W."/>
            <person name="Pohl T."/>
            <person name="Entian K.-D."/>
            <person name="Terryn N."/>
            <person name="Hartley N."/>
            <person name="Bent E."/>
            <person name="Johnson S."/>
            <person name="Langham S.-A."/>
            <person name="McCullagh B."/>
            <person name="Robben J."/>
            <person name="Grymonprez B."/>
            <person name="Zimmermann W."/>
            <person name="Ramsperger U."/>
            <person name="Wedler H."/>
            <person name="Balke K."/>
            <person name="Wedler E."/>
            <person name="Peters S."/>
            <person name="van Staveren M."/>
            <person name="Dirkse W."/>
            <person name="Mooijman P."/>
            <person name="Klein Lankhorst R."/>
            <person name="Weitzenegger T."/>
            <person name="Bothe G."/>
            <person name="Rose M."/>
            <person name="Hauf J."/>
            <person name="Berneiser S."/>
            <person name="Hempel S."/>
            <person name="Feldpausch M."/>
            <person name="Lamberth S."/>
            <person name="Villarroel R."/>
            <person name="Gielen J."/>
            <person name="Ardiles W."/>
            <person name="Bents O."/>
            <person name="Lemcke K."/>
            <person name="Kolesov G."/>
            <person name="Mayer K.F.X."/>
            <person name="Rudd S."/>
            <person name="Schoof H."/>
            <person name="Schueller C."/>
            <person name="Zaccaria P."/>
            <person name="Mewes H.-W."/>
            <person name="Bevan M."/>
            <person name="Fransz P.F."/>
        </authorList>
    </citation>
    <scope>NUCLEOTIDE SEQUENCE [LARGE SCALE GENOMIC DNA]</scope>
    <source>
        <strain>cv. Columbia</strain>
    </source>
</reference>
<reference key="2">
    <citation type="journal article" date="2017" name="Plant J.">
        <title>Araport11: a complete reannotation of the Arabidopsis thaliana reference genome.</title>
        <authorList>
            <person name="Cheng C.Y."/>
            <person name="Krishnakumar V."/>
            <person name="Chan A.P."/>
            <person name="Thibaud-Nissen F."/>
            <person name="Schobel S."/>
            <person name="Town C.D."/>
        </authorList>
    </citation>
    <scope>GENOME REANNOTATION</scope>
    <source>
        <strain>cv. Columbia</strain>
    </source>
</reference>
<reference key="3">
    <citation type="journal article" date="2003" name="Science">
        <title>Empirical analysis of transcriptional activity in the Arabidopsis genome.</title>
        <authorList>
            <person name="Yamada K."/>
            <person name="Lim J."/>
            <person name="Dale J.M."/>
            <person name="Chen H."/>
            <person name="Shinn P."/>
            <person name="Palm C.J."/>
            <person name="Southwick A.M."/>
            <person name="Wu H.C."/>
            <person name="Kim C.J."/>
            <person name="Nguyen M."/>
            <person name="Pham P.K."/>
            <person name="Cheuk R.F."/>
            <person name="Karlin-Newmann G."/>
            <person name="Liu S.X."/>
            <person name="Lam B."/>
            <person name="Sakano H."/>
            <person name="Wu T."/>
            <person name="Yu G."/>
            <person name="Miranda M."/>
            <person name="Quach H.L."/>
            <person name="Tripp M."/>
            <person name="Chang C.H."/>
            <person name="Lee J.M."/>
            <person name="Toriumi M.J."/>
            <person name="Chan M.M."/>
            <person name="Tang C.C."/>
            <person name="Onodera C.S."/>
            <person name="Deng J.M."/>
            <person name="Akiyama K."/>
            <person name="Ansari Y."/>
            <person name="Arakawa T."/>
            <person name="Banh J."/>
            <person name="Banno F."/>
            <person name="Bowser L."/>
            <person name="Brooks S.Y."/>
            <person name="Carninci P."/>
            <person name="Chao Q."/>
            <person name="Choy N."/>
            <person name="Enju A."/>
            <person name="Goldsmith A.D."/>
            <person name="Gurjal M."/>
            <person name="Hansen N.F."/>
            <person name="Hayashizaki Y."/>
            <person name="Johnson-Hopson C."/>
            <person name="Hsuan V.W."/>
            <person name="Iida K."/>
            <person name="Karnes M."/>
            <person name="Khan S."/>
            <person name="Koesema E."/>
            <person name="Ishida J."/>
            <person name="Jiang P.X."/>
            <person name="Jones T."/>
            <person name="Kawai J."/>
            <person name="Kamiya A."/>
            <person name="Meyers C."/>
            <person name="Nakajima M."/>
            <person name="Narusaka M."/>
            <person name="Seki M."/>
            <person name="Sakurai T."/>
            <person name="Satou M."/>
            <person name="Tamse R."/>
            <person name="Vaysberg M."/>
            <person name="Wallender E.K."/>
            <person name="Wong C."/>
            <person name="Yamamura Y."/>
            <person name="Yuan S."/>
            <person name="Shinozaki K."/>
            <person name="Davis R.W."/>
            <person name="Theologis A."/>
            <person name="Ecker J.R."/>
        </authorList>
    </citation>
    <scope>NUCLEOTIDE SEQUENCE [LARGE SCALE MRNA]</scope>
    <source>
        <strain>cv. Columbia</strain>
    </source>
</reference>
<reference key="4">
    <citation type="submission" date="2006-07" db="EMBL/GenBank/DDBJ databases">
        <title>Large-scale analysis of RIKEN Arabidopsis full-length (RAFL) cDNAs.</title>
        <authorList>
            <person name="Totoki Y."/>
            <person name="Seki M."/>
            <person name="Ishida J."/>
            <person name="Nakajima M."/>
            <person name="Enju A."/>
            <person name="Kamiya A."/>
            <person name="Narusaka M."/>
            <person name="Shin-i T."/>
            <person name="Nakagawa M."/>
            <person name="Sakamoto N."/>
            <person name="Oishi K."/>
            <person name="Kohara Y."/>
            <person name="Kobayashi M."/>
            <person name="Toyoda A."/>
            <person name="Sakaki Y."/>
            <person name="Sakurai T."/>
            <person name="Iida K."/>
            <person name="Akiyama K."/>
            <person name="Satou M."/>
            <person name="Toyoda T."/>
            <person name="Konagaya A."/>
            <person name="Carninci P."/>
            <person name="Kawai J."/>
            <person name="Hayashizaki Y."/>
            <person name="Shinozaki K."/>
        </authorList>
    </citation>
    <scope>NUCLEOTIDE SEQUENCE [LARGE SCALE MRNA]</scope>
    <source>
        <strain>cv. Columbia</strain>
    </source>
</reference>
<reference key="5">
    <citation type="submission" date="2002-03" db="EMBL/GenBank/DDBJ databases">
        <title>Full-length cDNA from Arabidopsis thaliana.</title>
        <authorList>
            <person name="Brover V.V."/>
            <person name="Troukhan M.E."/>
            <person name="Alexandrov N.A."/>
            <person name="Lu Y.-P."/>
            <person name="Flavell R.B."/>
            <person name="Feldmann K.A."/>
        </authorList>
    </citation>
    <scope>NUCLEOTIDE SEQUENCE [LARGE SCALE MRNA]</scope>
</reference>
<reference key="6">
    <citation type="journal article" date="2005" name="J. Exp. Bot.">
        <title>A novel gene family in Arabidopsis encoding putative heptahelical transmembrane proteins homologous to human adiponectin receptors and progestin receptors.</title>
        <authorList>
            <person name="Hsieh M.H."/>
            <person name="Goodman H.M."/>
        </authorList>
    </citation>
    <scope>GENE FAMILY</scope>
    <scope>NOMENCLATURE</scope>
    <scope>TISSUE SPECIFICITY</scope>
</reference>
<reference key="7">
    <citation type="journal article" date="2009" name="J. Exp. Bot.">
        <title>HHP1 is involved in osmotic stress sensitivity in Arabidopsis.</title>
        <authorList>
            <person name="Chen C.C."/>
            <person name="Liang C.S."/>
            <person name="Kao A.L."/>
            <person name="Yang C.C."/>
        </authorList>
    </citation>
    <scope>FUNCTION</scope>
    <scope>TISSUE SPECIFICITY</scope>
    <scope>INDUCTION</scope>
    <scope>DISRUPTION PHENOTYPE</scope>
</reference>
<reference key="8">
    <citation type="journal article" date="2010" name="J. Exp. Bot.">
        <title>HHP1, a novel signalling component in the cross-talk between the cold and osmotic signalling pathways in Arabidopsis.</title>
        <authorList>
            <person name="Chen C.C."/>
            <person name="Liang C.S."/>
            <person name="Kao A.L."/>
            <person name="Yang C.C."/>
        </authorList>
    </citation>
    <scope>FUNCTION</scope>
    <scope>INTERACTION WITH ICE1</scope>
    <scope>TISSUE SPECIFICITY</scope>
    <scope>INDUCTION BY DROUGHT</scope>
</reference>
<feature type="chain" id="PRO_0000430047" description="Heptahelical transmembrane protein 1">
    <location>
        <begin position="1"/>
        <end position="332"/>
    </location>
</feature>
<feature type="topological domain" description="Cytoplasmic" evidence="1">
    <location>
        <begin position="1"/>
        <end position="98"/>
    </location>
</feature>
<feature type="transmembrane region" description="Helical" evidence="1">
    <location>
        <begin position="99"/>
        <end position="119"/>
    </location>
</feature>
<feature type="topological domain" description="Extracellular" evidence="1">
    <location>
        <begin position="120"/>
        <end position="138"/>
    </location>
</feature>
<feature type="transmembrane region" description="Helical" evidence="1">
    <location>
        <begin position="139"/>
        <end position="159"/>
    </location>
</feature>
<feature type="topological domain" description="Cytoplasmic" evidence="1">
    <location>
        <begin position="160"/>
        <end position="172"/>
    </location>
</feature>
<feature type="transmembrane region" description="Helical" evidence="1">
    <location>
        <begin position="173"/>
        <end position="193"/>
    </location>
</feature>
<feature type="topological domain" description="Extracellular" evidence="1">
    <location>
        <begin position="194"/>
        <end position="199"/>
    </location>
</feature>
<feature type="transmembrane region" description="Helical" evidence="1">
    <location>
        <begin position="200"/>
        <end position="220"/>
    </location>
</feature>
<feature type="topological domain" description="Cytoplasmic" evidence="1">
    <location>
        <begin position="221"/>
        <end position="233"/>
    </location>
</feature>
<feature type="transmembrane region" description="Helical" evidence="1">
    <location>
        <begin position="234"/>
        <end position="254"/>
    </location>
</feature>
<feature type="topological domain" description="Extracellular" evidence="1">
    <location>
        <begin position="255"/>
        <end position="262"/>
    </location>
</feature>
<feature type="transmembrane region" description="Helical" evidence="1">
    <location>
        <begin position="263"/>
        <end position="283"/>
    </location>
</feature>
<feature type="topological domain" description="Cytoplasmic" evidence="1">
    <location>
        <begin position="284"/>
        <end position="303"/>
    </location>
</feature>
<feature type="transmembrane region" description="Helical" evidence="1">
    <location>
        <begin position="304"/>
        <end position="324"/>
    </location>
</feature>
<feature type="topological domain" description="Extracellular" evidence="1">
    <location>
        <begin position="325"/>
        <end position="332"/>
    </location>
</feature>
<feature type="region of interest" description="Disordered" evidence="2">
    <location>
        <begin position="1"/>
        <end position="52"/>
    </location>
</feature>
<feature type="compositionally biased region" description="Basic and acidic residues" evidence="2">
    <location>
        <begin position="26"/>
        <end position="37"/>
    </location>
</feature>
<feature type="compositionally biased region" description="Basic residues" evidence="2">
    <location>
        <begin position="38"/>
        <end position="52"/>
    </location>
</feature>
<protein>
    <recommendedName>
        <fullName>Heptahelical transmembrane protein 1</fullName>
    </recommendedName>
    <alternativeName>
        <fullName>PAQR family protein HHP1</fullName>
    </alternativeName>
</protein>
<dbReference type="EMBL" id="AF296825">
    <property type="status" value="NOT_ANNOTATED_CDS"/>
    <property type="molecule type" value="Genomic_DNA"/>
</dbReference>
<dbReference type="EMBL" id="CP002688">
    <property type="protein sequence ID" value="AED92823.1"/>
    <property type="molecule type" value="Genomic_DNA"/>
</dbReference>
<dbReference type="EMBL" id="AY057524">
    <property type="protein sequence ID" value="AAL09764.1"/>
    <property type="molecule type" value="mRNA"/>
</dbReference>
<dbReference type="EMBL" id="AY143975">
    <property type="protein sequence ID" value="AAN28914.1"/>
    <property type="molecule type" value="mRNA"/>
</dbReference>
<dbReference type="EMBL" id="AK226838">
    <property type="protein sequence ID" value="BAE98931.1"/>
    <property type="molecule type" value="mRNA"/>
</dbReference>
<dbReference type="EMBL" id="AY086377">
    <property type="protein sequence ID" value="AAM64444.1"/>
    <property type="molecule type" value="mRNA"/>
</dbReference>
<dbReference type="RefSeq" id="NP_197527.1">
    <property type="nucleotide sequence ID" value="NM_122034.3"/>
</dbReference>
<dbReference type="SMR" id="Q93ZH9"/>
<dbReference type="BioGRID" id="17425">
    <property type="interactions" value="19"/>
</dbReference>
<dbReference type="FunCoup" id="Q93ZH9">
    <property type="interactions" value="2438"/>
</dbReference>
<dbReference type="IntAct" id="Q93ZH9">
    <property type="interactions" value="18"/>
</dbReference>
<dbReference type="STRING" id="3702.Q93ZH9"/>
<dbReference type="iPTMnet" id="Q93ZH9"/>
<dbReference type="PaxDb" id="3702-AT5G20270.1"/>
<dbReference type="ProteomicsDB" id="230278"/>
<dbReference type="EnsemblPlants" id="AT5G20270.1">
    <property type="protein sequence ID" value="AT5G20270.1"/>
    <property type="gene ID" value="AT5G20270"/>
</dbReference>
<dbReference type="GeneID" id="832149"/>
<dbReference type="Gramene" id="AT5G20270.1">
    <property type="protein sequence ID" value="AT5G20270.1"/>
    <property type="gene ID" value="AT5G20270"/>
</dbReference>
<dbReference type="KEGG" id="ath:AT5G20270"/>
<dbReference type="Araport" id="AT5G20270"/>
<dbReference type="TAIR" id="AT5G20270">
    <property type="gene designation" value="HHP1"/>
</dbReference>
<dbReference type="eggNOG" id="KOG0748">
    <property type="taxonomic scope" value="Eukaryota"/>
</dbReference>
<dbReference type="HOGENOM" id="CLU_023075_4_0_1"/>
<dbReference type="InParanoid" id="Q93ZH9"/>
<dbReference type="OMA" id="IGNACDY"/>
<dbReference type="PhylomeDB" id="Q93ZH9"/>
<dbReference type="PRO" id="PR:Q93ZH9"/>
<dbReference type="Proteomes" id="UP000006548">
    <property type="component" value="Chromosome 5"/>
</dbReference>
<dbReference type="ExpressionAtlas" id="Q93ZH9">
    <property type="expression patterns" value="baseline and differential"/>
</dbReference>
<dbReference type="GO" id="GO:0016020">
    <property type="term" value="C:membrane"/>
    <property type="evidence" value="ECO:0007669"/>
    <property type="project" value="UniProtKB-SubCell"/>
</dbReference>
<dbReference type="GO" id="GO:0009788">
    <property type="term" value="P:negative regulation of abscisic acid-activated signaling pathway"/>
    <property type="evidence" value="ECO:0000315"/>
    <property type="project" value="UniProtKB"/>
</dbReference>
<dbReference type="GO" id="GO:0009725">
    <property type="term" value="P:response to hormone"/>
    <property type="evidence" value="ECO:0000270"/>
    <property type="project" value="TAIR"/>
</dbReference>
<dbReference type="GO" id="GO:0009651">
    <property type="term" value="P:response to salt stress"/>
    <property type="evidence" value="ECO:0000270"/>
    <property type="project" value="TAIR"/>
</dbReference>
<dbReference type="GO" id="GO:0009744">
    <property type="term" value="P:response to sucrose"/>
    <property type="evidence" value="ECO:0000270"/>
    <property type="project" value="TAIR"/>
</dbReference>
<dbReference type="InterPro" id="IPR004254">
    <property type="entry name" value="AdipoR/HlyIII-related"/>
</dbReference>
<dbReference type="PANTHER" id="PTHR20855">
    <property type="entry name" value="ADIPOR/PROGESTIN RECEPTOR-RELATED"/>
    <property type="match status" value="1"/>
</dbReference>
<dbReference type="PANTHER" id="PTHR20855:SF115">
    <property type="entry name" value="HEPTAHELICAL TRANSMEMBRANE PROTEIN 1"/>
    <property type="match status" value="1"/>
</dbReference>
<dbReference type="Pfam" id="PF03006">
    <property type="entry name" value="HlyIII"/>
    <property type="match status" value="1"/>
</dbReference>
<keyword id="KW-0472">Membrane</keyword>
<keyword id="KW-1185">Reference proteome</keyword>
<keyword id="KW-0346">Stress response</keyword>
<keyword id="KW-0812">Transmembrane</keyword>
<keyword id="KW-1133">Transmembrane helix</keyword>
<proteinExistence type="evidence at protein level"/>
<accession>Q93ZH9</accession>
<gene>
    <name type="primary">HHP1</name>
    <name type="ordered locus">At5g20270</name>
    <name type="ORF">F5O24.160</name>
</gene>
<name>HHP1_ARATH</name>
<sequence length="332" mass="37877">MDQNGHNDEAETVSCGNGNCKSKIVPGDDHGGDESSGTKRRKKRKTQQKTMKRRELMSYCELPEYMKDNEYILNYYRADWSIRDAFFSVFSFHNESLNVWTHLIGFIFFVALTVANIIHHDGFFPVDAKSPGNVTRWPFFVFLGGSMFCLLASSICHLFCCHSKELNVFLLRIDYAGITAMIITSFFPPIFYIFQCTPRWYFIYLAGITSMGIFTIITLFTPSLSAPKYRAFRALLFASMGLFGIVPAAHALVVNWGNPQRNVTLVYELLMAVFYLVGTGFYVGRVPERLKPGWFDRVGHSHQIFHVFVLLGALSHYAAALLFLDWRDHVGC</sequence>
<evidence type="ECO:0000255" key="1"/>
<evidence type="ECO:0000256" key="2">
    <source>
        <dbReference type="SAM" id="MobiDB-lite"/>
    </source>
</evidence>
<evidence type="ECO:0000269" key="3">
    <source>
    </source>
</evidence>
<evidence type="ECO:0000269" key="4">
    <source>
    </source>
</evidence>
<evidence type="ECO:0000269" key="5">
    <source>
    </source>
</evidence>
<evidence type="ECO:0000305" key="6"/>
<organism>
    <name type="scientific">Arabidopsis thaliana</name>
    <name type="common">Mouse-ear cress</name>
    <dbReference type="NCBI Taxonomy" id="3702"/>
    <lineage>
        <taxon>Eukaryota</taxon>
        <taxon>Viridiplantae</taxon>
        <taxon>Streptophyta</taxon>
        <taxon>Embryophyta</taxon>
        <taxon>Tracheophyta</taxon>
        <taxon>Spermatophyta</taxon>
        <taxon>Magnoliopsida</taxon>
        <taxon>eudicotyledons</taxon>
        <taxon>Gunneridae</taxon>
        <taxon>Pentapetalae</taxon>
        <taxon>rosids</taxon>
        <taxon>malvids</taxon>
        <taxon>Brassicales</taxon>
        <taxon>Brassicaceae</taxon>
        <taxon>Camelineae</taxon>
        <taxon>Arabidopsis</taxon>
    </lineage>
</organism>
<comment type="function">
    <text evidence="4 5">May act as a negative regulator of abscisic acid (ABA)-mediated osmotic stress signaling and function in cross-talk between cold and osmotic signaling.</text>
</comment>
<comment type="subunit">
    <text evidence="5">Interacts (via N-terminus) with SCRM/ICE1.</text>
</comment>
<comment type="subcellular location">
    <subcellularLocation>
        <location evidence="6">Membrane</location>
        <topology evidence="6">Multi-pass membrane protein</topology>
    </subcellularLocation>
</comment>
<comment type="tissue specificity">
    <text evidence="3 4 5">Expressed in roots, hypocotyls, vasculature of cotyledons and leaves, hydathodes and guard cells. In reproductive organs, expressed in trichomes, veins of sepals, stamens and stigmata of pistils.</text>
</comment>
<comment type="induction">
    <text evidence="4 5">By abscisic acid (ABA), salt, osmotic and drought stresses.</text>
</comment>
<comment type="disruption phenotype">
    <text evidence="4">Reduced apical meristem dominance and length of hypocotyl, and increased cotyledon curling. Mutant plants are hypersensitive to ABA and osmotic stress.</text>
</comment>
<comment type="similarity">
    <text evidence="6">Belongs to the ADIPOR family.</text>
</comment>